<sequence length="183" mass="20292">MHLLPEFASHHAVSIPELLVSRDERQARQHAWLKRHPVPLVSFTVVAPGPIKDSEVTRRIFNHGVTALRALATKQGWQIQEQAALVSASGPEGMLSIAAPARDLKLATIELEHSHPLGRLWDIDVLTPEGDILSRRDYSLPPRRCLLCEQSAAVCARGKTHQLTDLLNRMEALLNDVDACNVN</sequence>
<name>CITX_ECO45</name>
<organism>
    <name type="scientific">Escherichia coli O45:K1 (strain S88 / ExPEC)</name>
    <dbReference type="NCBI Taxonomy" id="585035"/>
    <lineage>
        <taxon>Bacteria</taxon>
        <taxon>Pseudomonadati</taxon>
        <taxon>Pseudomonadota</taxon>
        <taxon>Gammaproteobacteria</taxon>
        <taxon>Enterobacterales</taxon>
        <taxon>Enterobacteriaceae</taxon>
        <taxon>Escherichia</taxon>
    </lineage>
</organism>
<dbReference type="EC" id="2.7.7.61" evidence="1"/>
<dbReference type="EMBL" id="CU928161">
    <property type="protein sequence ID" value="CAR01996.1"/>
    <property type="molecule type" value="Genomic_DNA"/>
</dbReference>
<dbReference type="RefSeq" id="WP_000550390.1">
    <property type="nucleotide sequence ID" value="NC_011742.1"/>
</dbReference>
<dbReference type="SMR" id="B7MF27"/>
<dbReference type="KEGG" id="ecz:ECS88_0655"/>
<dbReference type="HOGENOM" id="CLU_104529_1_1_6"/>
<dbReference type="Proteomes" id="UP000000747">
    <property type="component" value="Chromosome"/>
</dbReference>
<dbReference type="GO" id="GO:0050519">
    <property type="term" value="F:holo-citrate lyase synthase activity"/>
    <property type="evidence" value="ECO:0007669"/>
    <property type="project" value="UniProtKB-UniRule"/>
</dbReference>
<dbReference type="GO" id="GO:0051191">
    <property type="term" value="P:prosthetic group biosynthetic process"/>
    <property type="evidence" value="ECO:0007669"/>
    <property type="project" value="InterPro"/>
</dbReference>
<dbReference type="HAMAP" id="MF_00398">
    <property type="entry name" value="CitX"/>
    <property type="match status" value="1"/>
</dbReference>
<dbReference type="InterPro" id="IPR005551">
    <property type="entry name" value="CitX"/>
</dbReference>
<dbReference type="NCBIfam" id="TIGR03124">
    <property type="entry name" value="citrate_citX"/>
    <property type="match status" value="1"/>
</dbReference>
<dbReference type="NCBIfam" id="NF002383">
    <property type="entry name" value="PRK01392.1"/>
    <property type="match status" value="1"/>
</dbReference>
<dbReference type="Pfam" id="PF03802">
    <property type="entry name" value="CitX"/>
    <property type="match status" value="1"/>
</dbReference>
<protein>
    <recommendedName>
        <fullName>Apo-citrate lyase phosphoribosyl-dephospho-CoA transferase</fullName>
        <ecNumber evidence="1">2.7.7.61</ecNumber>
    </recommendedName>
    <alternativeName>
        <fullName evidence="1">Apo-ACP nucleodityltransferase</fullName>
    </alternativeName>
    <alternativeName>
        <fullName evidence="1">Holo-ACP synthase</fullName>
    </alternativeName>
    <alternativeName>
        <fullName evidence="1">Holo-citrate lyase synthase</fullName>
    </alternativeName>
</protein>
<accession>B7MF27</accession>
<comment type="function">
    <text evidence="1">Transfers 2-(5''-triphosphoribosyl)-3'-dephosphocoenzyme-A on a serine residue to the apo-acyl carrier protein (gamma chain) of the citrate lyase to yield holo-acyl carrier protein.</text>
</comment>
<comment type="catalytic activity">
    <reaction evidence="1">
        <text>apo-[citrate lyase ACP] + 2'-(5''-triphospho-alpha-D-ribosyl)-3'-dephospho-CoA = holo-[citrate lyase ACP] + diphosphate</text>
        <dbReference type="Rhea" id="RHEA:16333"/>
        <dbReference type="Rhea" id="RHEA-COMP:10157"/>
        <dbReference type="Rhea" id="RHEA-COMP:10158"/>
        <dbReference type="ChEBI" id="CHEBI:29999"/>
        <dbReference type="ChEBI" id="CHEBI:33019"/>
        <dbReference type="ChEBI" id="CHEBI:61378"/>
        <dbReference type="ChEBI" id="CHEBI:82683"/>
        <dbReference type="EC" id="2.7.7.61"/>
    </reaction>
</comment>
<comment type="similarity">
    <text evidence="1">Belongs to the CitX family.</text>
</comment>
<proteinExistence type="inferred from homology"/>
<gene>
    <name evidence="1" type="primary">citX</name>
    <name type="ordered locus">ECS88_0655</name>
</gene>
<evidence type="ECO:0000255" key="1">
    <source>
        <dbReference type="HAMAP-Rule" id="MF_00398"/>
    </source>
</evidence>
<reference key="1">
    <citation type="journal article" date="2009" name="PLoS Genet.">
        <title>Organised genome dynamics in the Escherichia coli species results in highly diverse adaptive paths.</title>
        <authorList>
            <person name="Touchon M."/>
            <person name="Hoede C."/>
            <person name="Tenaillon O."/>
            <person name="Barbe V."/>
            <person name="Baeriswyl S."/>
            <person name="Bidet P."/>
            <person name="Bingen E."/>
            <person name="Bonacorsi S."/>
            <person name="Bouchier C."/>
            <person name="Bouvet O."/>
            <person name="Calteau A."/>
            <person name="Chiapello H."/>
            <person name="Clermont O."/>
            <person name="Cruveiller S."/>
            <person name="Danchin A."/>
            <person name="Diard M."/>
            <person name="Dossat C."/>
            <person name="Karoui M.E."/>
            <person name="Frapy E."/>
            <person name="Garry L."/>
            <person name="Ghigo J.M."/>
            <person name="Gilles A.M."/>
            <person name="Johnson J."/>
            <person name="Le Bouguenec C."/>
            <person name="Lescat M."/>
            <person name="Mangenot S."/>
            <person name="Martinez-Jehanne V."/>
            <person name="Matic I."/>
            <person name="Nassif X."/>
            <person name="Oztas S."/>
            <person name="Petit M.A."/>
            <person name="Pichon C."/>
            <person name="Rouy Z."/>
            <person name="Ruf C.S."/>
            <person name="Schneider D."/>
            <person name="Tourret J."/>
            <person name="Vacherie B."/>
            <person name="Vallenet D."/>
            <person name="Medigue C."/>
            <person name="Rocha E.P.C."/>
            <person name="Denamur E."/>
        </authorList>
    </citation>
    <scope>NUCLEOTIDE SEQUENCE [LARGE SCALE GENOMIC DNA]</scope>
    <source>
        <strain>S88 / ExPEC</strain>
    </source>
</reference>
<feature type="chain" id="PRO_1000189604" description="Apo-citrate lyase phosphoribosyl-dephospho-CoA transferase">
    <location>
        <begin position="1"/>
        <end position="183"/>
    </location>
</feature>
<keyword id="KW-0548">Nucleotidyltransferase</keyword>
<keyword id="KW-1185">Reference proteome</keyword>
<keyword id="KW-0808">Transferase</keyword>